<feature type="chain" id="PRO_0000384271" description="Mitochondrial distribution and morphology protein 12">
    <location>
        <begin position="1"/>
        <end position="439"/>
    </location>
</feature>
<feature type="domain" description="SMP-LTD" evidence="1">
    <location>
        <begin position="1"/>
        <end position="439"/>
    </location>
</feature>
<feature type="region of interest" description="Disordered" evidence="2">
    <location>
        <begin position="70"/>
        <end position="103"/>
    </location>
</feature>
<feature type="region of interest" description="Disordered" evidence="2">
    <location>
        <begin position="185"/>
        <end position="274"/>
    </location>
</feature>
<feature type="region of interest" description="Disordered" evidence="2">
    <location>
        <begin position="354"/>
        <end position="386"/>
    </location>
</feature>
<feature type="compositionally biased region" description="Basic and acidic residues" evidence="2">
    <location>
        <begin position="78"/>
        <end position="91"/>
    </location>
</feature>
<feature type="compositionally biased region" description="Polar residues" evidence="2">
    <location>
        <begin position="215"/>
        <end position="245"/>
    </location>
</feature>
<feature type="compositionally biased region" description="Basic and acidic residues" evidence="2">
    <location>
        <begin position="247"/>
        <end position="261"/>
    </location>
</feature>
<feature type="compositionally biased region" description="Basic and acidic residues" evidence="2">
    <location>
        <begin position="362"/>
        <end position="371"/>
    </location>
</feature>
<accession>B0XN24</accession>
<comment type="function">
    <text evidence="1">Component of the ERMES/MDM complex, which serves as a molecular tether to connect the endoplasmic reticulum (ER) and mitochondria. Components of this complex are involved in the control of mitochondrial shape and protein biogenesis, and function in nonvesicular lipid trafficking between the ER and mitochondria. Mdm12 is required for the interaction of the ER-resident membrane protein mmm1 and the outer mitochondrial membrane-resident beta-barrel protein mdm10. The mdm12-mmm1 subcomplex functions in the major beta-barrel assembly pathway that is responsible for biogenesis of all mitochondrial outer membrane beta-barrel proteins, and acts in a late step after the SAM complex. The mdm10-mdm12-mmm1 subcomplex further acts in the TOM40-specific pathway after the action of the mdm12-mmm1 complex. Essential for establishing and maintaining the structure of mitochondria and maintenance of mtDNA nucleoids.</text>
</comment>
<comment type="subunit">
    <text evidence="1">Component of the ER-mitochondria encounter structure (ERMES) or MDM complex, composed of mmm1, mdm10, mdm12 and mdm34. A mmm1 homodimer associates with one molecule of mdm12 on each side in a pairwise head-to-tail manner, and the SMP-LTD domains of mmm1 and mdm12 generate a continuous hydrophobic tunnel for phospholipid trafficking.</text>
</comment>
<comment type="subcellular location">
    <subcellularLocation>
        <location evidence="1">Mitochondrion outer membrane</location>
        <topology evidence="1">Peripheral membrane protein</topology>
        <orientation evidence="1">Cytoplasmic side</orientation>
    </subcellularLocation>
    <subcellularLocation>
        <location evidence="1">Endoplasmic reticulum membrane</location>
        <topology evidence="1">Peripheral membrane protein</topology>
        <orientation evidence="1">Cytoplasmic side</orientation>
    </subcellularLocation>
    <text evidence="1">The ERMES/MDM complex localizes to a few discrete foci (around 10 per single cell), that represent mitochondria-endoplasmic reticulum junctions. These foci are often found next to mtDNA nucleoids.</text>
</comment>
<comment type="domain">
    <text evidence="1">The SMP-LTD domain is a barrel-like domain that can bind various types of glycerophospholipids in its interior and mediate their transfer between two adjacent bilayers.</text>
</comment>
<comment type="similarity">
    <text evidence="1">Belongs to the MDM12 family.</text>
</comment>
<gene>
    <name evidence="1" type="primary">mdm12</name>
    <name type="ORF">AFUB_014330</name>
</gene>
<protein>
    <recommendedName>
        <fullName evidence="1">Mitochondrial distribution and morphology protein 12</fullName>
    </recommendedName>
    <alternativeName>
        <fullName evidence="1">Mitochondrial inheritance component MDM12</fullName>
    </alternativeName>
</protein>
<dbReference type="EMBL" id="DS499594">
    <property type="protein sequence ID" value="EDP56714.1"/>
    <property type="molecule type" value="Genomic_DNA"/>
</dbReference>
<dbReference type="SMR" id="B0XN24"/>
<dbReference type="EnsemblFungi" id="EDP56714">
    <property type="protein sequence ID" value="EDP56714"/>
    <property type="gene ID" value="AFUB_014330"/>
</dbReference>
<dbReference type="VEuPathDB" id="FungiDB:AFUB_014330"/>
<dbReference type="HOGENOM" id="CLU_026794_0_0_1"/>
<dbReference type="OrthoDB" id="93754at5052"/>
<dbReference type="PhylomeDB" id="B0XN24"/>
<dbReference type="Proteomes" id="UP000001699">
    <property type="component" value="Unassembled WGS sequence"/>
</dbReference>
<dbReference type="GO" id="GO:0005789">
    <property type="term" value="C:endoplasmic reticulum membrane"/>
    <property type="evidence" value="ECO:0007669"/>
    <property type="project" value="UniProtKB-SubCell"/>
</dbReference>
<dbReference type="GO" id="GO:0032865">
    <property type="term" value="C:ERMES complex"/>
    <property type="evidence" value="ECO:0007669"/>
    <property type="project" value="UniProtKB-UniRule"/>
</dbReference>
<dbReference type="GO" id="GO:0008289">
    <property type="term" value="F:lipid binding"/>
    <property type="evidence" value="ECO:0007669"/>
    <property type="project" value="UniProtKB-KW"/>
</dbReference>
<dbReference type="GO" id="GO:0000002">
    <property type="term" value="P:mitochondrial genome maintenance"/>
    <property type="evidence" value="ECO:0007669"/>
    <property type="project" value="UniProtKB-UniRule"/>
</dbReference>
<dbReference type="GO" id="GO:1990456">
    <property type="term" value="P:mitochondrion-endoplasmic reticulum membrane tethering"/>
    <property type="evidence" value="ECO:0007669"/>
    <property type="project" value="TreeGrafter"/>
</dbReference>
<dbReference type="GO" id="GO:0015914">
    <property type="term" value="P:phospholipid transport"/>
    <property type="evidence" value="ECO:0007669"/>
    <property type="project" value="TreeGrafter"/>
</dbReference>
<dbReference type="GO" id="GO:0045040">
    <property type="term" value="P:protein insertion into mitochondrial outer membrane"/>
    <property type="evidence" value="ECO:0007669"/>
    <property type="project" value="UniProtKB-UniRule"/>
</dbReference>
<dbReference type="CDD" id="cd21672">
    <property type="entry name" value="SMP_Mdm12"/>
    <property type="match status" value="1"/>
</dbReference>
<dbReference type="HAMAP" id="MF_03104">
    <property type="entry name" value="Mdm12"/>
    <property type="match status" value="1"/>
</dbReference>
<dbReference type="InterPro" id="IPR027532">
    <property type="entry name" value="Mdm12"/>
</dbReference>
<dbReference type="InterPro" id="IPR019411">
    <property type="entry name" value="MMM1_dom"/>
</dbReference>
<dbReference type="InterPro" id="IPR031468">
    <property type="entry name" value="SMP_LBD"/>
</dbReference>
<dbReference type="PANTHER" id="PTHR28204">
    <property type="entry name" value="MITOCHONDRIAL DISTRIBUTION AND MORPHOLOGY PROTEIN 12"/>
    <property type="match status" value="1"/>
</dbReference>
<dbReference type="PANTHER" id="PTHR28204:SF1">
    <property type="entry name" value="MITOCHONDRIAL DISTRIBUTION AND MORPHOLOGY PROTEIN 12"/>
    <property type="match status" value="1"/>
</dbReference>
<dbReference type="Pfam" id="PF10296">
    <property type="entry name" value="MMM1"/>
    <property type="match status" value="1"/>
</dbReference>
<dbReference type="PROSITE" id="PS51847">
    <property type="entry name" value="SMP"/>
    <property type="match status" value="1"/>
</dbReference>
<proteinExistence type="inferred from homology"/>
<organism>
    <name type="scientific">Aspergillus fumigatus (strain CBS 144.89 / FGSC A1163 / CEA10)</name>
    <name type="common">Neosartorya fumigata</name>
    <dbReference type="NCBI Taxonomy" id="451804"/>
    <lineage>
        <taxon>Eukaryota</taxon>
        <taxon>Fungi</taxon>
        <taxon>Dikarya</taxon>
        <taxon>Ascomycota</taxon>
        <taxon>Pezizomycotina</taxon>
        <taxon>Eurotiomycetes</taxon>
        <taxon>Eurotiomycetidae</taxon>
        <taxon>Eurotiales</taxon>
        <taxon>Aspergillaceae</taxon>
        <taxon>Aspergillus</taxon>
        <taxon>Aspergillus subgen. Fumigati</taxon>
    </lineage>
</organism>
<reference key="1">
    <citation type="journal article" date="2008" name="PLoS Genet.">
        <title>Genomic islands in the pathogenic filamentous fungus Aspergillus fumigatus.</title>
        <authorList>
            <person name="Fedorova N.D."/>
            <person name="Khaldi N."/>
            <person name="Joardar V.S."/>
            <person name="Maiti R."/>
            <person name="Amedeo P."/>
            <person name="Anderson M.J."/>
            <person name="Crabtree J."/>
            <person name="Silva J.C."/>
            <person name="Badger J.H."/>
            <person name="Albarraq A."/>
            <person name="Angiuoli S."/>
            <person name="Bussey H."/>
            <person name="Bowyer P."/>
            <person name="Cotty P.J."/>
            <person name="Dyer P.S."/>
            <person name="Egan A."/>
            <person name="Galens K."/>
            <person name="Fraser-Liggett C.M."/>
            <person name="Haas B.J."/>
            <person name="Inman J.M."/>
            <person name="Kent R."/>
            <person name="Lemieux S."/>
            <person name="Malavazi I."/>
            <person name="Orvis J."/>
            <person name="Roemer T."/>
            <person name="Ronning C.M."/>
            <person name="Sundaram J.P."/>
            <person name="Sutton G."/>
            <person name="Turner G."/>
            <person name="Venter J.C."/>
            <person name="White O.R."/>
            <person name="Whitty B.R."/>
            <person name="Youngman P."/>
            <person name="Wolfe K.H."/>
            <person name="Goldman G.H."/>
            <person name="Wortman J.R."/>
            <person name="Jiang B."/>
            <person name="Denning D.W."/>
            <person name="Nierman W.C."/>
        </authorList>
    </citation>
    <scope>NUCLEOTIDE SEQUENCE [LARGE SCALE GENOMIC DNA]</scope>
    <source>
        <strain>CBS 144.89 / FGSC A1163 / CEA10</strain>
    </source>
</reference>
<evidence type="ECO:0000255" key="1">
    <source>
        <dbReference type="HAMAP-Rule" id="MF_03104"/>
    </source>
</evidence>
<evidence type="ECO:0000256" key="2">
    <source>
        <dbReference type="SAM" id="MobiDB-lite"/>
    </source>
</evidence>
<name>MDM12_ASPFC</name>
<sequence length="439" mass="48457">MSIDVNWRFATSGPDGEALAERIRSFIHDRFQQVALPRFIRSVQVHAFDFGTIPPELEIKDFCEPFADFYEEDDDDHTSDASEERGEEHSSRWNSTHPELNEPSYREDTAVNHSLRDPFPDGFPTSPLRSPLGEHLNPHFLPRASTPGIPGGTSTLGYHLMSLGGLSGTQTPLAAVAGGNPFASGWSDSGMGPGNRGRSETHAGMQHPRAEPEIDTSNSTSRPSTANTLPSHPSGSSKNSGQAATGRNDHPSLHAGEHLEDSVTQGQLPLPPRMRERRPEDFQVLCHVKYAGDVRLSLTAEILLDYPMPSFVGLPLKLNVTGITFDGVAVIAYIRKRVHFCFLSAEDADALIGPEQQQQRESAGDDHRPQSRPDSSASASQKRHGGLLQEIRVESEIGRKEDGKQVLKNVGKVERFVLAQVRRIFEEELVYPSFWTFLI</sequence>
<keyword id="KW-0256">Endoplasmic reticulum</keyword>
<keyword id="KW-0445">Lipid transport</keyword>
<keyword id="KW-0446">Lipid-binding</keyword>
<keyword id="KW-0472">Membrane</keyword>
<keyword id="KW-0496">Mitochondrion</keyword>
<keyword id="KW-1000">Mitochondrion outer membrane</keyword>
<keyword id="KW-0813">Transport</keyword>